<gene>
    <name evidence="1" type="primary">guaA</name>
    <name type="ordered locus">Cla_0501</name>
</gene>
<proteinExistence type="inferred from homology"/>
<feature type="chain" id="PRO_1000190231" description="GMP synthase [glutamine-hydrolyzing]">
    <location>
        <begin position="1"/>
        <end position="511"/>
    </location>
</feature>
<feature type="domain" description="Glutamine amidotransferase type-1" evidence="1">
    <location>
        <begin position="5"/>
        <end position="195"/>
    </location>
</feature>
<feature type="domain" description="GMPS ATP-PPase" evidence="1">
    <location>
        <begin position="196"/>
        <end position="386"/>
    </location>
</feature>
<feature type="active site" description="Nucleophile" evidence="1">
    <location>
        <position position="82"/>
    </location>
</feature>
<feature type="active site" evidence="1">
    <location>
        <position position="169"/>
    </location>
</feature>
<feature type="active site" evidence="1">
    <location>
        <position position="171"/>
    </location>
</feature>
<feature type="binding site" evidence="1">
    <location>
        <begin position="223"/>
        <end position="229"/>
    </location>
    <ligand>
        <name>ATP</name>
        <dbReference type="ChEBI" id="CHEBI:30616"/>
    </ligand>
</feature>
<name>GUAA_CAMLR</name>
<reference key="1">
    <citation type="journal article" date="2008" name="Foodborne Pathog. Dis.">
        <title>The complete genome sequence and analysis of the human pathogen Campylobacter lari.</title>
        <authorList>
            <person name="Miller W.G."/>
            <person name="Wang G."/>
            <person name="Binnewies T.T."/>
            <person name="Parker C.T."/>
        </authorList>
    </citation>
    <scope>NUCLEOTIDE SEQUENCE [LARGE SCALE GENOMIC DNA]</scope>
    <source>
        <strain>RM2100 / D67 / ATCC BAA-1060</strain>
    </source>
</reference>
<comment type="function">
    <text evidence="1">Catalyzes the synthesis of GMP from XMP.</text>
</comment>
<comment type="catalytic activity">
    <reaction evidence="1">
        <text>XMP + L-glutamine + ATP + H2O = GMP + L-glutamate + AMP + diphosphate + 2 H(+)</text>
        <dbReference type="Rhea" id="RHEA:11680"/>
        <dbReference type="ChEBI" id="CHEBI:15377"/>
        <dbReference type="ChEBI" id="CHEBI:15378"/>
        <dbReference type="ChEBI" id="CHEBI:29985"/>
        <dbReference type="ChEBI" id="CHEBI:30616"/>
        <dbReference type="ChEBI" id="CHEBI:33019"/>
        <dbReference type="ChEBI" id="CHEBI:57464"/>
        <dbReference type="ChEBI" id="CHEBI:58115"/>
        <dbReference type="ChEBI" id="CHEBI:58359"/>
        <dbReference type="ChEBI" id="CHEBI:456215"/>
        <dbReference type="EC" id="6.3.5.2"/>
    </reaction>
</comment>
<comment type="pathway">
    <text evidence="1">Purine metabolism; GMP biosynthesis; GMP from XMP (L-Gln route): step 1/1.</text>
</comment>
<comment type="subunit">
    <text evidence="1">Homodimer.</text>
</comment>
<dbReference type="EC" id="6.3.5.2" evidence="1"/>
<dbReference type="EMBL" id="CP000932">
    <property type="protein sequence ID" value="ACM63849.1"/>
    <property type="molecule type" value="Genomic_DNA"/>
</dbReference>
<dbReference type="RefSeq" id="WP_012661232.1">
    <property type="nucleotide sequence ID" value="NC_012039.1"/>
</dbReference>
<dbReference type="SMR" id="B9KFL4"/>
<dbReference type="STRING" id="306263.Cla_0501"/>
<dbReference type="MEROPS" id="C26.957"/>
<dbReference type="KEGG" id="cla:CLA_0501"/>
<dbReference type="PATRIC" id="fig|306263.5.peg.497"/>
<dbReference type="eggNOG" id="COG0518">
    <property type="taxonomic scope" value="Bacteria"/>
</dbReference>
<dbReference type="eggNOG" id="COG0519">
    <property type="taxonomic scope" value="Bacteria"/>
</dbReference>
<dbReference type="HOGENOM" id="CLU_014340_0_5_7"/>
<dbReference type="UniPathway" id="UPA00189">
    <property type="reaction ID" value="UER00296"/>
</dbReference>
<dbReference type="Proteomes" id="UP000007727">
    <property type="component" value="Chromosome"/>
</dbReference>
<dbReference type="GO" id="GO:0005829">
    <property type="term" value="C:cytosol"/>
    <property type="evidence" value="ECO:0007669"/>
    <property type="project" value="TreeGrafter"/>
</dbReference>
<dbReference type="GO" id="GO:0005524">
    <property type="term" value="F:ATP binding"/>
    <property type="evidence" value="ECO:0007669"/>
    <property type="project" value="UniProtKB-UniRule"/>
</dbReference>
<dbReference type="GO" id="GO:0003921">
    <property type="term" value="F:GMP synthase activity"/>
    <property type="evidence" value="ECO:0007669"/>
    <property type="project" value="InterPro"/>
</dbReference>
<dbReference type="CDD" id="cd01742">
    <property type="entry name" value="GATase1_GMP_Synthase"/>
    <property type="match status" value="1"/>
</dbReference>
<dbReference type="CDD" id="cd01997">
    <property type="entry name" value="GMP_synthase_C"/>
    <property type="match status" value="1"/>
</dbReference>
<dbReference type="FunFam" id="3.30.300.10:FF:000002">
    <property type="entry name" value="GMP synthase [glutamine-hydrolyzing]"/>
    <property type="match status" value="1"/>
</dbReference>
<dbReference type="FunFam" id="3.40.50.620:FF:000001">
    <property type="entry name" value="GMP synthase [glutamine-hydrolyzing]"/>
    <property type="match status" value="1"/>
</dbReference>
<dbReference type="FunFam" id="3.40.50.880:FF:000001">
    <property type="entry name" value="GMP synthase [glutamine-hydrolyzing]"/>
    <property type="match status" value="1"/>
</dbReference>
<dbReference type="Gene3D" id="3.30.300.10">
    <property type="match status" value="1"/>
</dbReference>
<dbReference type="Gene3D" id="3.40.50.880">
    <property type="match status" value="1"/>
</dbReference>
<dbReference type="Gene3D" id="3.40.50.620">
    <property type="entry name" value="HUPs"/>
    <property type="match status" value="1"/>
</dbReference>
<dbReference type="HAMAP" id="MF_00344">
    <property type="entry name" value="GMP_synthase"/>
    <property type="match status" value="1"/>
</dbReference>
<dbReference type="InterPro" id="IPR029062">
    <property type="entry name" value="Class_I_gatase-like"/>
</dbReference>
<dbReference type="InterPro" id="IPR017926">
    <property type="entry name" value="GATASE"/>
</dbReference>
<dbReference type="InterPro" id="IPR001674">
    <property type="entry name" value="GMP_synth_C"/>
</dbReference>
<dbReference type="InterPro" id="IPR004739">
    <property type="entry name" value="GMP_synth_GATase"/>
</dbReference>
<dbReference type="InterPro" id="IPR022955">
    <property type="entry name" value="GMP_synthase"/>
</dbReference>
<dbReference type="InterPro" id="IPR025777">
    <property type="entry name" value="GMPS_ATP_PPase_dom"/>
</dbReference>
<dbReference type="InterPro" id="IPR022310">
    <property type="entry name" value="NAD/GMP_synthase"/>
</dbReference>
<dbReference type="InterPro" id="IPR014729">
    <property type="entry name" value="Rossmann-like_a/b/a_fold"/>
</dbReference>
<dbReference type="NCBIfam" id="TIGR00884">
    <property type="entry name" value="guaA_Cterm"/>
    <property type="match status" value="1"/>
</dbReference>
<dbReference type="NCBIfam" id="TIGR00888">
    <property type="entry name" value="guaA_Nterm"/>
    <property type="match status" value="1"/>
</dbReference>
<dbReference type="NCBIfam" id="NF000848">
    <property type="entry name" value="PRK00074.1"/>
    <property type="match status" value="1"/>
</dbReference>
<dbReference type="PANTHER" id="PTHR11922:SF2">
    <property type="entry name" value="GMP SYNTHASE [GLUTAMINE-HYDROLYZING]"/>
    <property type="match status" value="1"/>
</dbReference>
<dbReference type="PANTHER" id="PTHR11922">
    <property type="entry name" value="GMP SYNTHASE-RELATED"/>
    <property type="match status" value="1"/>
</dbReference>
<dbReference type="Pfam" id="PF00117">
    <property type="entry name" value="GATase"/>
    <property type="match status" value="1"/>
</dbReference>
<dbReference type="Pfam" id="PF00958">
    <property type="entry name" value="GMP_synt_C"/>
    <property type="match status" value="1"/>
</dbReference>
<dbReference type="Pfam" id="PF02540">
    <property type="entry name" value="NAD_synthase"/>
    <property type="match status" value="1"/>
</dbReference>
<dbReference type="PRINTS" id="PR00097">
    <property type="entry name" value="ANTSNTHASEII"/>
</dbReference>
<dbReference type="PRINTS" id="PR00099">
    <property type="entry name" value="CPSGATASE"/>
</dbReference>
<dbReference type="PRINTS" id="PR00096">
    <property type="entry name" value="GATASE"/>
</dbReference>
<dbReference type="SUPFAM" id="SSF52402">
    <property type="entry name" value="Adenine nucleotide alpha hydrolases-like"/>
    <property type="match status" value="1"/>
</dbReference>
<dbReference type="SUPFAM" id="SSF52317">
    <property type="entry name" value="Class I glutamine amidotransferase-like"/>
    <property type="match status" value="1"/>
</dbReference>
<dbReference type="SUPFAM" id="SSF54810">
    <property type="entry name" value="GMP synthetase C-terminal dimerisation domain"/>
    <property type="match status" value="1"/>
</dbReference>
<dbReference type="PROSITE" id="PS51273">
    <property type="entry name" value="GATASE_TYPE_1"/>
    <property type="match status" value="1"/>
</dbReference>
<dbReference type="PROSITE" id="PS51553">
    <property type="entry name" value="GMPS_ATP_PPASE"/>
    <property type="match status" value="1"/>
</dbReference>
<organism>
    <name type="scientific">Campylobacter lari (strain RM2100 / D67 / ATCC BAA-1060)</name>
    <dbReference type="NCBI Taxonomy" id="306263"/>
    <lineage>
        <taxon>Bacteria</taxon>
        <taxon>Pseudomonadati</taxon>
        <taxon>Campylobacterota</taxon>
        <taxon>Epsilonproteobacteria</taxon>
        <taxon>Campylobacterales</taxon>
        <taxon>Campylobacteraceae</taxon>
        <taxon>Campylobacter</taxon>
    </lineage>
</organism>
<sequence>MKKADILVLDFGSQYTQLIARRLREQGVYAEILPFNVSLDEIKAKEPKGIILSGGPASVYANDAYFCDKGVFDLNIPVLGICYGMQLMAHHFGANVAPAGHKEYGKATIDIQNDSDLFKNLPKKQTVWMSHSDKVENLPQGFEVLATSENSPFCVFGDEKRKFFALQFHPEVQHSEFGKSILKNFAKYACNCDSVWNMGSFAKTQAQKIKEEVGNDKVLCAVSGGVDSSVVAALLASAIKDQVVVVFVDNGLLRSGEKEQVEYMFKHTLGIDLISIDAREIFLSRLAGVRDPEQKRKIIGNTFIEVFEEEAKKHKDVKYLAQGTLYTDIIESSVVGASKTIKSHHNVGGLPEKMNLKLIEPLKEIFKDEVRALGMELGLSKDVVYRHPFPGPGLAIRIMGEVNEPSLELLRKADVILIEELKSSGWYDKTWQAFCVLLNVQSVGVMGDNRTYDNAVCVRVVNASDGMTATFSHLPYELLENISRRIINEVNGINRVVYDISSKPPATIEWE</sequence>
<protein>
    <recommendedName>
        <fullName evidence="1">GMP synthase [glutamine-hydrolyzing]</fullName>
        <ecNumber evidence="1">6.3.5.2</ecNumber>
    </recommendedName>
    <alternativeName>
        <fullName evidence="1">GMP synthetase</fullName>
    </alternativeName>
    <alternativeName>
        <fullName evidence="1">Glutamine amidotransferase</fullName>
    </alternativeName>
</protein>
<accession>B9KFL4</accession>
<evidence type="ECO:0000255" key="1">
    <source>
        <dbReference type="HAMAP-Rule" id="MF_00344"/>
    </source>
</evidence>
<keyword id="KW-0067">ATP-binding</keyword>
<keyword id="KW-0315">Glutamine amidotransferase</keyword>
<keyword id="KW-0332">GMP biosynthesis</keyword>
<keyword id="KW-0436">Ligase</keyword>
<keyword id="KW-0547">Nucleotide-binding</keyword>
<keyword id="KW-0658">Purine biosynthesis</keyword>
<keyword id="KW-1185">Reference proteome</keyword>